<feature type="chain" id="PRO_0000422375" description="UPF0328 protein ECU07_0040">
    <location>
        <begin position="1"/>
        <end position="228"/>
    </location>
</feature>
<proteinExistence type="evidence at protein level"/>
<name>Y704_ENCCU</name>
<keyword id="KW-1185">Reference proteome</keyword>
<sequence length="228" mass="25775">MCLIFTKDRFEKSPFLKFIILLLPFSYSAVQYALLRTNWKSDNKPEGILQSILYHTLSLLLLAFAAISILSITAFTLDKWESSESIFFSIVLPSFFIPPTYLLSTSCRLVPGQIGFTDTGINVLIDIPILLCPLVSLVLIIALEETECCYYSAIISSVFILIRLLREKYSPSEKSTLPTAPWRVAILVLILTLAALIYAFMMWGSMDILNDHFGLLNKLKRVFPFTNA</sequence>
<gene>
    <name type="ordered locus">ECU07_0040</name>
</gene>
<accession>P0CS98</accession>
<accession>Q8ST40</accession>
<comment type="developmental stage">
    <text evidence="1">Expressed in late sporogonial stages.</text>
</comment>
<comment type="similarity">
    <text evidence="2">Belongs to the UPF0328 family.</text>
</comment>
<evidence type="ECO:0000269" key="1">
    <source>
    </source>
</evidence>
<evidence type="ECO:0000305" key="2"/>
<reference key="1">
    <citation type="journal article" date="2001" name="Nature">
        <title>Genome sequence and gene compaction of the eukaryote parasite Encephalitozoon cuniculi.</title>
        <authorList>
            <person name="Katinka M.D."/>
            <person name="Duprat S."/>
            <person name="Cornillot E."/>
            <person name="Metenier G."/>
            <person name="Thomarat F."/>
            <person name="Prensier G."/>
            <person name="Barbe V."/>
            <person name="Peyretaillade E."/>
            <person name="Brottier P."/>
            <person name="Wincker P."/>
            <person name="Delbac F."/>
            <person name="El Alaoui H."/>
            <person name="Peyret P."/>
            <person name="Saurin W."/>
            <person name="Gouy M."/>
            <person name="Weissenbach J."/>
            <person name="Vivares C.P."/>
        </authorList>
    </citation>
    <scope>NUCLEOTIDE SEQUENCE [LARGE SCALE GENOMIC DNA]</scope>
    <source>
        <strain>GB-M1</strain>
    </source>
</reference>
<reference key="2">
    <citation type="journal article" date="2009" name="BMC Genomics">
        <title>Identification of transcriptional signals in Encephalitozoon cuniculi widespread among Microsporidia phylum: support for accurate structural genome annotation.</title>
        <authorList>
            <person name="Peyretaillade E."/>
            <person name="Goncalves O."/>
            <person name="Terrat S."/>
            <person name="Dugat-Bony E."/>
            <person name="Wincker P."/>
            <person name="Cornman R.S."/>
            <person name="Evans J.D."/>
            <person name="Delbac F."/>
            <person name="Peyret P."/>
        </authorList>
    </citation>
    <scope>GENOME REANNOTATION</scope>
    <source>
        <strain>GB-M1</strain>
    </source>
</reference>
<reference key="3">
    <citation type="journal article" date="2006" name="Proteomics">
        <title>Proteomic analysis of the eukaryotic parasite Encephalitozoon cuniculi (microsporidia): a reference map for proteins expressed in late sporogonial stages.</title>
        <authorList>
            <person name="Brosson D."/>
            <person name="Kuhn L."/>
            <person name="Delbac F."/>
            <person name="Garin J."/>
            <person name="Vivares C.P."/>
            <person name="Texier C."/>
        </authorList>
    </citation>
    <scope>IDENTIFICATION BY MASS SPECTROMETRY [LARGE SCALE ANALYSIS]</scope>
    <scope>DEVELOPMENTAL STAGE</scope>
</reference>
<organism>
    <name type="scientific">Encephalitozoon cuniculi (strain GB-M1)</name>
    <name type="common">Microsporidian parasite</name>
    <dbReference type="NCBI Taxonomy" id="284813"/>
    <lineage>
        <taxon>Eukaryota</taxon>
        <taxon>Fungi</taxon>
        <taxon>Fungi incertae sedis</taxon>
        <taxon>Microsporidia</taxon>
        <taxon>Unikaryonidae</taxon>
        <taxon>Encephalitozoon</taxon>
    </lineage>
</organism>
<dbReference type="EMBL" id="AL590447">
    <property type="protein sequence ID" value="CAD25536.2"/>
    <property type="molecule type" value="Genomic_DNA"/>
</dbReference>
<dbReference type="RefSeq" id="NP_585932.2">
    <property type="nucleotide sequence ID" value="NM_001041554.2"/>
</dbReference>
<dbReference type="GeneID" id="859360"/>
<dbReference type="KEGG" id="ecu:ECU07_0040"/>
<dbReference type="VEuPathDB" id="MicrosporidiaDB:ECU07_0040"/>
<dbReference type="HOGENOM" id="CLU_059413_0_0_1"/>
<dbReference type="InParanoid" id="P0CS98"/>
<dbReference type="OrthoDB" id="2200858at2759"/>
<dbReference type="Proteomes" id="UP000000819">
    <property type="component" value="Chromosome VII"/>
</dbReference>
<dbReference type="InterPro" id="IPR019081">
    <property type="entry name" value="UPF0328"/>
</dbReference>
<dbReference type="Pfam" id="PF09591">
    <property type="entry name" value="DUF2463"/>
    <property type="match status" value="1"/>
</dbReference>
<protein>
    <recommendedName>
        <fullName>UPF0328 protein ECU07_0040</fullName>
    </recommendedName>
</protein>